<evidence type="ECO:0000255" key="1">
    <source>
        <dbReference type="HAMAP-Rule" id="MF_00072"/>
    </source>
</evidence>
<proteinExistence type="inferred from homology"/>
<feature type="chain" id="PRO_1000092499" description="Peptide chain release factor 3">
    <location>
        <begin position="1"/>
        <end position="529"/>
    </location>
</feature>
<feature type="domain" description="tr-type G">
    <location>
        <begin position="11"/>
        <end position="280"/>
    </location>
</feature>
<feature type="binding site" evidence="1">
    <location>
        <begin position="20"/>
        <end position="27"/>
    </location>
    <ligand>
        <name>GTP</name>
        <dbReference type="ChEBI" id="CHEBI:37565"/>
    </ligand>
</feature>
<feature type="binding site" evidence="1">
    <location>
        <begin position="88"/>
        <end position="92"/>
    </location>
    <ligand>
        <name>GTP</name>
        <dbReference type="ChEBI" id="CHEBI:37565"/>
    </ligand>
</feature>
<feature type="binding site" evidence="1">
    <location>
        <begin position="142"/>
        <end position="145"/>
    </location>
    <ligand>
        <name>GTP</name>
        <dbReference type="ChEBI" id="CHEBI:37565"/>
    </ligand>
</feature>
<sequence length="529" mass="59563">MTLSPYLQEVAKRRTFAIISHPDAGKTTITEKVLLFGQAIQTAGTVKGRGSSQHAKSDWMEMEKQRGISITTSVMQFPYHDCLVNLLDTPGHEDFSEDTYRTLTAVDCCLMVIDAAKGVEDRTRKLMEVTRLRDTPILTFMNKLDRDIRDPMELLDEVENELKIGCAPITWPIGCGKLFKGVYHLYKDETYLYQTGKGHTIQEVRIVKGLNNPDLDAAVGEDLAQQLRDELELVQGASNEFDEELFLAGEITPVFFGTALGNFGVDHMLDGLVAWAPAPMPRQTDTRTVEASEEKFTGFVFKIQANMDPKHRDRVAFMRVVSGKYEKGMKLRQVRTGKDVVISDALTFMAGDRSHVEEAYPGDILGLHNHGTIQIGDTFTQGEMMKFTGIPNFAPELFRRIRLKDPLKQKQLLKGLVQLSEEGAVQVFRPISNNDLIVGAVGVLQFDVVVARLKSEYNVEAIYESVNVATARWVESADAKKFEEFKRKNETQLALDGGDNLTYIAPTMVNLNLTQERYPDVQFRKTREH</sequence>
<accession>B5BL11</accession>
<comment type="function">
    <text evidence="1">Increases the formation of ribosomal termination complexes and stimulates activities of RF-1 and RF-2. It binds guanine nucleotides and has strong preference for UGA stop codons. It may interact directly with the ribosome. The stimulation of RF-1 and RF-2 is significantly reduced by GTP and GDP, but not by GMP.</text>
</comment>
<comment type="subcellular location">
    <subcellularLocation>
        <location evidence="1">Cytoplasm</location>
    </subcellularLocation>
</comment>
<comment type="similarity">
    <text evidence="1">Belongs to the TRAFAC class translation factor GTPase superfamily. Classic translation factor GTPase family. PrfC subfamily.</text>
</comment>
<reference key="1">
    <citation type="journal article" date="2009" name="BMC Genomics">
        <title>Pseudogene accumulation in the evolutionary histories of Salmonella enterica serovars Paratyphi A and Typhi.</title>
        <authorList>
            <person name="Holt K.E."/>
            <person name="Thomson N.R."/>
            <person name="Wain J."/>
            <person name="Langridge G.C."/>
            <person name="Hasan R."/>
            <person name="Bhutta Z.A."/>
            <person name="Quail M.A."/>
            <person name="Norbertczak H."/>
            <person name="Walker D."/>
            <person name="Simmonds M."/>
            <person name="White B."/>
            <person name="Bason N."/>
            <person name="Mungall K."/>
            <person name="Dougan G."/>
            <person name="Parkhill J."/>
        </authorList>
    </citation>
    <scope>NUCLEOTIDE SEQUENCE [LARGE SCALE GENOMIC DNA]</scope>
    <source>
        <strain>AKU_12601</strain>
    </source>
</reference>
<gene>
    <name evidence="1" type="primary">prfC</name>
    <name type="ordered locus">SSPA4060</name>
</gene>
<dbReference type="EMBL" id="FM200053">
    <property type="protein sequence ID" value="CAR62357.1"/>
    <property type="molecule type" value="Genomic_DNA"/>
</dbReference>
<dbReference type="RefSeq" id="WP_000175965.1">
    <property type="nucleotide sequence ID" value="NC_011147.1"/>
</dbReference>
<dbReference type="SMR" id="B5BL11"/>
<dbReference type="KEGG" id="sek:SSPA4060"/>
<dbReference type="HOGENOM" id="CLU_002794_2_1_6"/>
<dbReference type="Proteomes" id="UP000001869">
    <property type="component" value="Chromosome"/>
</dbReference>
<dbReference type="GO" id="GO:0005829">
    <property type="term" value="C:cytosol"/>
    <property type="evidence" value="ECO:0007669"/>
    <property type="project" value="TreeGrafter"/>
</dbReference>
<dbReference type="GO" id="GO:0005525">
    <property type="term" value="F:GTP binding"/>
    <property type="evidence" value="ECO:0007669"/>
    <property type="project" value="UniProtKB-UniRule"/>
</dbReference>
<dbReference type="GO" id="GO:0003924">
    <property type="term" value="F:GTPase activity"/>
    <property type="evidence" value="ECO:0007669"/>
    <property type="project" value="InterPro"/>
</dbReference>
<dbReference type="GO" id="GO:0097216">
    <property type="term" value="F:guanosine tetraphosphate binding"/>
    <property type="evidence" value="ECO:0007669"/>
    <property type="project" value="UniProtKB-ARBA"/>
</dbReference>
<dbReference type="GO" id="GO:0016150">
    <property type="term" value="F:translation release factor activity, codon nonspecific"/>
    <property type="evidence" value="ECO:0007669"/>
    <property type="project" value="TreeGrafter"/>
</dbReference>
<dbReference type="GO" id="GO:0016149">
    <property type="term" value="F:translation release factor activity, codon specific"/>
    <property type="evidence" value="ECO:0007669"/>
    <property type="project" value="UniProtKB-UniRule"/>
</dbReference>
<dbReference type="GO" id="GO:0006449">
    <property type="term" value="P:regulation of translational termination"/>
    <property type="evidence" value="ECO:0007669"/>
    <property type="project" value="UniProtKB-UniRule"/>
</dbReference>
<dbReference type="CDD" id="cd04169">
    <property type="entry name" value="RF3"/>
    <property type="match status" value="1"/>
</dbReference>
<dbReference type="CDD" id="cd03689">
    <property type="entry name" value="RF3_II"/>
    <property type="match status" value="1"/>
</dbReference>
<dbReference type="CDD" id="cd16259">
    <property type="entry name" value="RF3_III"/>
    <property type="match status" value="1"/>
</dbReference>
<dbReference type="FunFam" id="2.40.30.10:FF:000040">
    <property type="entry name" value="Peptide chain release factor 3"/>
    <property type="match status" value="1"/>
</dbReference>
<dbReference type="FunFam" id="3.30.70.3280:FF:000001">
    <property type="entry name" value="Peptide chain release factor 3"/>
    <property type="match status" value="1"/>
</dbReference>
<dbReference type="FunFam" id="3.40.50.300:FF:000184">
    <property type="entry name" value="Peptide chain release factor 3"/>
    <property type="match status" value="1"/>
</dbReference>
<dbReference type="FunFam" id="3.40.50.300:FF:000253">
    <property type="entry name" value="Peptide chain release factor 3"/>
    <property type="match status" value="1"/>
</dbReference>
<dbReference type="Gene3D" id="3.40.50.300">
    <property type="entry name" value="P-loop containing nucleotide triphosphate hydrolases"/>
    <property type="match status" value="3"/>
</dbReference>
<dbReference type="Gene3D" id="3.30.70.3280">
    <property type="entry name" value="Peptide chain release factor 3, domain III"/>
    <property type="match status" value="1"/>
</dbReference>
<dbReference type="HAMAP" id="MF_00072">
    <property type="entry name" value="Rel_fac_3"/>
    <property type="match status" value="1"/>
</dbReference>
<dbReference type="InterPro" id="IPR053905">
    <property type="entry name" value="EF-G-like_DII"/>
</dbReference>
<dbReference type="InterPro" id="IPR035647">
    <property type="entry name" value="EFG_III/V"/>
</dbReference>
<dbReference type="InterPro" id="IPR031157">
    <property type="entry name" value="G_TR_CS"/>
</dbReference>
<dbReference type="InterPro" id="IPR027417">
    <property type="entry name" value="P-loop_NTPase"/>
</dbReference>
<dbReference type="InterPro" id="IPR004548">
    <property type="entry name" value="PrfC"/>
</dbReference>
<dbReference type="InterPro" id="IPR032090">
    <property type="entry name" value="RF3_C"/>
</dbReference>
<dbReference type="InterPro" id="IPR038467">
    <property type="entry name" value="RF3_dom_3_sf"/>
</dbReference>
<dbReference type="InterPro" id="IPR041732">
    <property type="entry name" value="RF3_GTP-bd"/>
</dbReference>
<dbReference type="InterPro" id="IPR005225">
    <property type="entry name" value="Small_GTP-bd"/>
</dbReference>
<dbReference type="InterPro" id="IPR000795">
    <property type="entry name" value="T_Tr_GTP-bd_dom"/>
</dbReference>
<dbReference type="InterPro" id="IPR009000">
    <property type="entry name" value="Transl_B-barrel_sf"/>
</dbReference>
<dbReference type="NCBIfam" id="TIGR00503">
    <property type="entry name" value="prfC"/>
    <property type="match status" value="1"/>
</dbReference>
<dbReference type="NCBIfam" id="NF001964">
    <property type="entry name" value="PRK00741.1"/>
    <property type="match status" value="1"/>
</dbReference>
<dbReference type="NCBIfam" id="TIGR00231">
    <property type="entry name" value="small_GTP"/>
    <property type="match status" value="1"/>
</dbReference>
<dbReference type="PANTHER" id="PTHR43556">
    <property type="entry name" value="PEPTIDE CHAIN RELEASE FACTOR RF3"/>
    <property type="match status" value="1"/>
</dbReference>
<dbReference type="PANTHER" id="PTHR43556:SF2">
    <property type="entry name" value="PEPTIDE CHAIN RELEASE FACTOR RF3"/>
    <property type="match status" value="1"/>
</dbReference>
<dbReference type="Pfam" id="PF22042">
    <property type="entry name" value="EF-G_D2"/>
    <property type="match status" value="1"/>
</dbReference>
<dbReference type="Pfam" id="PF00009">
    <property type="entry name" value="GTP_EFTU"/>
    <property type="match status" value="1"/>
</dbReference>
<dbReference type="Pfam" id="PF16658">
    <property type="entry name" value="RF3_C"/>
    <property type="match status" value="1"/>
</dbReference>
<dbReference type="PRINTS" id="PR00315">
    <property type="entry name" value="ELONGATNFCT"/>
</dbReference>
<dbReference type="SUPFAM" id="SSF54980">
    <property type="entry name" value="EF-G C-terminal domain-like"/>
    <property type="match status" value="1"/>
</dbReference>
<dbReference type="SUPFAM" id="SSF52540">
    <property type="entry name" value="P-loop containing nucleoside triphosphate hydrolases"/>
    <property type="match status" value="1"/>
</dbReference>
<dbReference type="SUPFAM" id="SSF50447">
    <property type="entry name" value="Translation proteins"/>
    <property type="match status" value="1"/>
</dbReference>
<dbReference type="PROSITE" id="PS00301">
    <property type="entry name" value="G_TR_1"/>
    <property type="match status" value="1"/>
</dbReference>
<dbReference type="PROSITE" id="PS51722">
    <property type="entry name" value="G_TR_2"/>
    <property type="match status" value="1"/>
</dbReference>
<protein>
    <recommendedName>
        <fullName evidence="1">Peptide chain release factor 3</fullName>
        <shortName evidence="1">RF-3</shortName>
    </recommendedName>
</protein>
<organism>
    <name type="scientific">Salmonella paratyphi A (strain AKU_12601)</name>
    <dbReference type="NCBI Taxonomy" id="554290"/>
    <lineage>
        <taxon>Bacteria</taxon>
        <taxon>Pseudomonadati</taxon>
        <taxon>Pseudomonadota</taxon>
        <taxon>Gammaproteobacteria</taxon>
        <taxon>Enterobacterales</taxon>
        <taxon>Enterobacteriaceae</taxon>
        <taxon>Salmonella</taxon>
    </lineage>
</organism>
<keyword id="KW-0963">Cytoplasm</keyword>
<keyword id="KW-0342">GTP-binding</keyword>
<keyword id="KW-0547">Nucleotide-binding</keyword>
<keyword id="KW-0648">Protein biosynthesis</keyword>
<name>RF3_SALPK</name>